<dbReference type="EC" id="4.2.1.182" evidence="1"/>
<dbReference type="EMBL" id="CP001463">
    <property type="protein sequence ID" value="ACS90992.1"/>
    <property type="molecule type" value="Genomic_DNA"/>
</dbReference>
<dbReference type="RefSeq" id="WP_015850208.1">
    <property type="nucleotide sequence ID" value="NC_012883.1"/>
</dbReference>
<dbReference type="SMR" id="C6A011"/>
<dbReference type="STRING" id="604354.TSIB_1943"/>
<dbReference type="GeneID" id="8096955"/>
<dbReference type="KEGG" id="tsi:TSIB_1943"/>
<dbReference type="eggNOG" id="arCOG04279">
    <property type="taxonomic scope" value="Archaea"/>
</dbReference>
<dbReference type="HOGENOM" id="CLU_141583_2_0_2"/>
<dbReference type="OrthoDB" id="18062at2157"/>
<dbReference type="UniPathway" id="UPA00057"/>
<dbReference type="Proteomes" id="UP000009079">
    <property type="component" value="Chromosome"/>
</dbReference>
<dbReference type="GO" id="GO:0016836">
    <property type="term" value="F:hydro-lyase activity"/>
    <property type="evidence" value="ECO:0007669"/>
    <property type="project" value="UniProtKB-UniRule"/>
</dbReference>
<dbReference type="GO" id="GO:0019287">
    <property type="term" value="P:isopentenyl diphosphate biosynthetic process, mevalonate pathway"/>
    <property type="evidence" value="ECO:0007669"/>
    <property type="project" value="UniProtKB-UniRule"/>
</dbReference>
<dbReference type="CDD" id="cd01356">
    <property type="entry name" value="AcnX_swivel"/>
    <property type="match status" value="1"/>
</dbReference>
<dbReference type="Gene3D" id="3.50.30.10">
    <property type="entry name" value="Phosphohistidine domain"/>
    <property type="match status" value="1"/>
</dbReference>
<dbReference type="HAMAP" id="MF_00078">
    <property type="entry name" value="PMDh_S"/>
    <property type="match status" value="1"/>
</dbReference>
<dbReference type="InterPro" id="IPR012016">
    <property type="entry name" value="PMDh-S-like"/>
</dbReference>
<dbReference type="InterPro" id="IPR002840">
    <property type="entry name" value="PMDh-S-like_dom"/>
</dbReference>
<dbReference type="InterPro" id="IPR020794">
    <property type="entry name" value="PMDh_S"/>
</dbReference>
<dbReference type="NCBIfam" id="NF003046">
    <property type="entry name" value="PRK03955.1"/>
    <property type="match status" value="1"/>
</dbReference>
<dbReference type="PANTHER" id="PTHR36577">
    <property type="entry name" value="DUF521 DOMAIN PROTEIN (AFU_ORTHOLOGUE AFUA_6G00490)"/>
    <property type="match status" value="1"/>
</dbReference>
<dbReference type="PANTHER" id="PTHR36577:SF3">
    <property type="entry name" value="DUF521 DOMAIN PROTEIN (AFU_ORTHOLOGUE AFUA_6G00490)"/>
    <property type="match status" value="1"/>
</dbReference>
<dbReference type="Pfam" id="PF01989">
    <property type="entry name" value="AcnX_swivel_put"/>
    <property type="match status" value="1"/>
</dbReference>
<dbReference type="PIRSF" id="PIRSF004966">
    <property type="entry name" value="UCP004966"/>
    <property type="match status" value="1"/>
</dbReference>
<dbReference type="SUPFAM" id="SSF52016">
    <property type="entry name" value="LeuD/IlvD-like"/>
    <property type="match status" value="1"/>
</dbReference>
<reference key="1">
    <citation type="journal article" date="2009" name="Appl. Environ. Microbiol.">
        <title>Metabolic versatility and indigenous origin of the archaeon Thermococcus sibiricus, isolated from a siberian oil reservoir, as revealed by genome analysis.</title>
        <authorList>
            <person name="Mardanov A.V."/>
            <person name="Ravin N.V."/>
            <person name="Svetlitchnyi V.A."/>
            <person name="Beletsky A.V."/>
            <person name="Miroshnichenko M.L."/>
            <person name="Bonch-Osmolovskaya E.A."/>
            <person name="Skryabin K.G."/>
        </authorList>
    </citation>
    <scope>NUCLEOTIDE SEQUENCE [LARGE SCALE GENOMIC DNA]</scope>
    <source>
        <strain>DSM 12597 / MM 739</strain>
    </source>
</reference>
<name>PMDHS_THESM</name>
<organism>
    <name type="scientific">Thermococcus sibiricus (strain DSM 12597 / MM 739)</name>
    <dbReference type="NCBI Taxonomy" id="604354"/>
    <lineage>
        <taxon>Archaea</taxon>
        <taxon>Methanobacteriati</taxon>
        <taxon>Methanobacteriota</taxon>
        <taxon>Thermococci</taxon>
        <taxon>Thermococcales</taxon>
        <taxon>Thermococcaceae</taxon>
        <taxon>Thermococcus</taxon>
    </lineage>
</organism>
<keyword id="KW-0414">Isoprene biosynthesis</keyword>
<keyword id="KW-0456">Lyase</keyword>
<keyword id="KW-1185">Reference proteome</keyword>
<comment type="function">
    <text evidence="1">Component of a hydro-lyase that catalyzes the dehydration of mevalonate 5-phosphate (MVA5P) to form trans-anhydromevalonate 5-phosphate (tAHMP). Involved in the archaeal mevalonate (MVA) pathway, which provides fundamental precursors for isoprenoid biosynthesis, such as isopentenyl diphosphate (IPP) and dimethylallyl diphosphate (DMAPP).</text>
</comment>
<comment type="catalytic activity">
    <reaction evidence="1">
        <text>(R)-5-phosphomevalonate = (2E)-3-methyl-5-phosphooxypent-2-enoate + H2O</text>
        <dbReference type="Rhea" id="RHEA:78975"/>
        <dbReference type="ChEBI" id="CHEBI:15377"/>
        <dbReference type="ChEBI" id="CHEBI:58146"/>
        <dbReference type="ChEBI" id="CHEBI:229665"/>
        <dbReference type="EC" id="4.2.1.182"/>
    </reaction>
    <physiologicalReaction direction="left-to-right" evidence="1">
        <dbReference type="Rhea" id="RHEA:78976"/>
    </physiologicalReaction>
</comment>
<comment type="pathway">
    <text evidence="1">Isoprenoid biosynthesis; isopentenyl diphosphate biosynthesis via mevalonate pathway.</text>
</comment>
<comment type="subunit">
    <text evidence="1">Heterodimer composed of a large subunit (PMDh-L) and a small subunit (PMDh-S).</text>
</comment>
<comment type="similarity">
    <text evidence="1">Belongs to the AcnX type II small subunit family.</text>
</comment>
<accession>C6A011</accession>
<protein>
    <recommendedName>
        <fullName evidence="1">Phosphomevalonate dehydratase small subunit</fullName>
        <shortName evidence="1">PMDh small subunit</shortName>
        <shortName evidence="1">PMDh-S</shortName>
        <ecNumber evidence="1">4.2.1.182</ecNumber>
    </recommendedName>
</protein>
<evidence type="ECO:0000255" key="1">
    <source>
        <dbReference type="HAMAP-Rule" id="MF_00078"/>
    </source>
</evidence>
<gene>
    <name type="ordered locus">TSIB_1943</name>
</gene>
<feature type="chain" id="PRO_1000202526" description="Phosphomevalonate dehydratase small subunit">
    <location>
        <begin position="1"/>
        <end position="130"/>
    </location>
</feature>
<feature type="active site" description="Proton acceptor" evidence="1">
    <location>
        <position position="62"/>
    </location>
</feature>
<proteinExistence type="inferred from homology"/>
<sequence length="130" mass="13876">MRLKGRKIFGGKVRGTALVSRRPLSFLGGVDPNTGVIIDVESDIRGENVKDKILVFPRGKGSTVGSYIVYQLKKNGVAPKAIVVEEAETIVATGAIIAGIPMVDKIDTSKIRSGQIIEVDADKGEVNVEE</sequence>